<protein>
    <recommendedName>
        <fullName>RING-H2 finger protein ATL20</fullName>
        <ecNumber evidence="4">2.3.2.27</ecNumber>
    </recommendedName>
    <alternativeName>
        <fullName evidence="4">RING-type E3 ubiquitin transferase ATL20</fullName>
    </alternativeName>
</protein>
<comment type="catalytic activity">
    <reaction evidence="4">
        <text>S-ubiquitinyl-[E2 ubiquitin-conjugating enzyme]-L-cysteine + [acceptor protein]-L-lysine = [E2 ubiquitin-conjugating enzyme]-L-cysteine + N(6)-ubiquitinyl-[acceptor protein]-L-lysine.</text>
        <dbReference type="EC" id="2.3.2.27"/>
    </reaction>
</comment>
<comment type="pathway">
    <text>Protein modification; protein ubiquitination.</text>
</comment>
<comment type="subcellular location">
    <subcellularLocation>
        <location evidence="4">Membrane</location>
        <topology evidence="4">Single-pass membrane protein</topology>
    </subcellularLocation>
</comment>
<comment type="domain">
    <text evidence="1">The RING-type zinc finger domain mediates binding to an E2 ubiquitin-conjugating enzyme.</text>
</comment>
<comment type="similarity">
    <text evidence="4">Belongs to the RING-type zinc finger family. ATL subfamily.</text>
</comment>
<comment type="sequence caution" evidence="4">
    <conflict type="erroneous gene model prediction">
        <sequence resource="EMBL-CDS" id="AAG51486"/>
    </conflict>
</comment>
<dbReference type="EC" id="2.3.2.27" evidence="4"/>
<dbReference type="EMBL" id="AC069471">
    <property type="protein sequence ID" value="AAG51486.1"/>
    <property type="status" value="ALT_SEQ"/>
    <property type="molecule type" value="Genomic_DNA"/>
</dbReference>
<dbReference type="EMBL" id="CP002684">
    <property type="protein sequence ID" value="AEE30905.1"/>
    <property type="molecule type" value="Genomic_DNA"/>
</dbReference>
<dbReference type="EMBL" id="DQ446294">
    <property type="protein sequence ID" value="ABE65658.1"/>
    <property type="molecule type" value="mRNA"/>
</dbReference>
<dbReference type="PIR" id="A86406">
    <property type="entry name" value="A86406"/>
</dbReference>
<dbReference type="RefSeq" id="NP_174125.2">
    <property type="nucleotide sequence ID" value="NM_102569.2"/>
</dbReference>
<dbReference type="SMR" id="Q9C7E9"/>
<dbReference type="PaxDb" id="3702-AT1G28040.1"/>
<dbReference type="EnsemblPlants" id="AT1G28040.1">
    <property type="protein sequence ID" value="AT1G28040.1"/>
    <property type="gene ID" value="AT1G28040"/>
</dbReference>
<dbReference type="GeneID" id="839697"/>
<dbReference type="Gramene" id="AT1G28040.1">
    <property type="protein sequence ID" value="AT1G28040.1"/>
    <property type="gene ID" value="AT1G28040"/>
</dbReference>
<dbReference type="KEGG" id="ath:AT1G28040"/>
<dbReference type="Araport" id="AT1G28040"/>
<dbReference type="TAIR" id="AT1G28040">
    <property type="gene designation" value="ATL20"/>
</dbReference>
<dbReference type="eggNOG" id="KOG0800">
    <property type="taxonomic scope" value="Eukaryota"/>
</dbReference>
<dbReference type="HOGENOM" id="CLU_046769_0_0_1"/>
<dbReference type="InParanoid" id="Q9C7E9"/>
<dbReference type="OMA" id="SAFRSCQ"/>
<dbReference type="PhylomeDB" id="Q9C7E9"/>
<dbReference type="UniPathway" id="UPA00143"/>
<dbReference type="PRO" id="PR:Q9C7E9"/>
<dbReference type="Proteomes" id="UP000006548">
    <property type="component" value="Chromosome 1"/>
</dbReference>
<dbReference type="ExpressionAtlas" id="Q9C7E9">
    <property type="expression patterns" value="baseline and differential"/>
</dbReference>
<dbReference type="GO" id="GO:0016020">
    <property type="term" value="C:membrane"/>
    <property type="evidence" value="ECO:0007669"/>
    <property type="project" value="UniProtKB-SubCell"/>
</dbReference>
<dbReference type="GO" id="GO:0016740">
    <property type="term" value="F:transferase activity"/>
    <property type="evidence" value="ECO:0007669"/>
    <property type="project" value="UniProtKB-KW"/>
</dbReference>
<dbReference type="GO" id="GO:0008270">
    <property type="term" value="F:zinc ion binding"/>
    <property type="evidence" value="ECO:0007669"/>
    <property type="project" value="UniProtKB-KW"/>
</dbReference>
<dbReference type="GO" id="GO:0016567">
    <property type="term" value="P:protein ubiquitination"/>
    <property type="evidence" value="ECO:0007669"/>
    <property type="project" value="UniProtKB-UniPathway"/>
</dbReference>
<dbReference type="CDD" id="cd16461">
    <property type="entry name" value="RING-H2_EL5-like"/>
    <property type="match status" value="1"/>
</dbReference>
<dbReference type="Gene3D" id="3.30.40.10">
    <property type="entry name" value="Zinc/RING finger domain, C3HC4 (zinc finger)"/>
    <property type="match status" value="1"/>
</dbReference>
<dbReference type="InterPro" id="IPR046948">
    <property type="entry name" value="ATL20-22-like"/>
</dbReference>
<dbReference type="InterPro" id="IPR001841">
    <property type="entry name" value="Znf_RING"/>
</dbReference>
<dbReference type="InterPro" id="IPR013083">
    <property type="entry name" value="Znf_RING/FYVE/PHD"/>
</dbReference>
<dbReference type="PANTHER" id="PTHR46279:SF14">
    <property type="entry name" value="RING-H2 FINGER PROTEIN ATL20-RELATED"/>
    <property type="match status" value="1"/>
</dbReference>
<dbReference type="PANTHER" id="PTHR46279">
    <property type="entry name" value="RING/U-BOX SUPERFAMILY PROTEIN"/>
    <property type="match status" value="1"/>
</dbReference>
<dbReference type="Pfam" id="PF13639">
    <property type="entry name" value="zf-RING_2"/>
    <property type="match status" value="1"/>
</dbReference>
<dbReference type="SMART" id="SM00184">
    <property type="entry name" value="RING"/>
    <property type="match status" value="1"/>
</dbReference>
<dbReference type="SUPFAM" id="SSF57850">
    <property type="entry name" value="RING/U-box"/>
    <property type="match status" value="1"/>
</dbReference>
<dbReference type="PROSITE" id="PS50089">
    <property type="entry name" value="ZF_RING_2"/>
    <property type="match status" value="1"/>
</dbReference>
<keyword id="KW-0472">Membrane</keyword>
<keyword id="KW-0479">Metal-binding</keyword>
<keyword id="KW-1185">Reference proteome</keyword>
<keyword id="KW-0808">Transferase</keyword>
<keyword id="KW-0812">Transmembrane</keyword>
<keyword id="KW-1133">Transmembrane helix</keyword>
<keyword id="KW-0833">Ubl conjugation pathway</keyword>
<keyword id="KW-0862">Zinc</keyword>
<keyword id="KW-0863">Zinc-finger</keyword>
<gene>
    <name type="primary">ATL20</name>
    <name type="ordered locus">At1g28040</name>
    <name type="ORF">F13K9.14</name>
</gene>
<reference key="1">
    <citation type="journal article" date="2000" name="Nature">
        <title>Sequence and analysis of chromosome 1 of the plant Arabidopsis thaliana.</title>
        <authorList>
            <person name="Theologis A."/>
            <person name="Ecker J.R."/>
            <person name="Palm C.J."/>
            <person name="Federspiel N.A."/>
            <person name="Kaul S."/>
            <person name="White O."/>
            <person name="Alonso J."/>
            <person name="Altafi H."/>
            <person name="Araujo R."/>
            <person name="Bowman C.L."/>
            <person name="Brooks S.Y."/>
            <person name="Buehler E."/>
            <person name="Chan A."/>
            <person name="Chao Q."/>
            <person name="Chen H."/>
            <person name="Cheuk R.F."/>
            <person name="Chin C.W."/>
            <person name="Chung M.K."/>
            <person name="Conn L."/>
            <person name="Conway A.B."/>
            <person name="Conway A.R."/>
            <person name="Creasy T.H."/>
            <person name="Dewar K."/>
            <person name="Dunn P."/>
            <person name="Etgu P."/>
            <person name="Feldblyum T.V."/>
            <person name="Feng J.-D."/>
            <person name="Fong B."/>
            <person name="Fujii C.Y."/>
            <person name="Gill J.E."/>
            <person name="Goldsmith A.D."/>
            <person name="Haas B."/>
            <person name="Hansen N.F."/>
            <person name="Hughes B."/>
            <person name="Huizar L."/>
            <person name="Hunter J.L."/>
            <person name="Jenkins J."/>
            <person name="Johnson-Hopson C."/>
            <person name="Khan S."/>
            <person name="Khaykin E."/>
            <person name="Kim C.J."/>
            <person name="Koo H.L."/>
            <person name="Kremenetskaia I."/>
            <person name="Kurtz D.B."/>
            <person name="Kwan A."/>
            <person name="Lam B."/>
            <person name="Langin-Hooper S."/>
            <person name="Lee A."/>
            <person name="Lee J.M."/>
            <person name="Lenz C.A."/>
            <person name="Li J.H."/>
            <person name="Li Y.-P."/>
            <person name="Lin X."/>
            <person name="Liu S.X."/>
            <person name="Liu Z.A."/>
            <person name="Luros J.S."/>
            <person name="Maiti R."/>
            <person name="Marziali A."/>
            <person name="Militscher J."/>
            <person name="Miranda M."/>
            <person name="Nguyen M."/>
            <person name="Nierman W.C."/>
            <person name="Osborne B.I."/>
            <person name="Pai G."/>
            <person name="Peterson J."/>
            <person name="Pham P.K."/>
            <person name="Rizzo M."/>
            <person name="Rooney T."/>
            <person name="Rowley D."/>
            <person name="Sakano H."/>
            <person name="Salzberg S.L."/>
            <person name="Schwartz J.R."/>
            <person name="Shinn P."/>
            <person name="Southwick A.M."/>
            <person name="Sun H."/>
            <person name="Tallon L.J."/>
            <person name="Tambunga G."/>
            <person name="Toriumi M.J."/>
            <person name="Town C.D."/>
            <person name="Utterback T."/>
            <person name="Van Aken S."/>
            <person name="Vaysberg M."/>
            <person name="Vysotskaia V.S."/>
            <person name="Walker M."/>
            <person name="Wu D."/>
            <person name="Yu G."/>
            <person name="Fraser C.M."/>
            <person name="Venter J.C."/>
            <person name="Davis R.W."/>
        </authorList>
    </citation>
    <scope>NUCLEOTIDE SEQUENCE [LARGE SCALE GENOMIC DNA]</scope>
    <source>
        <strain>cv. Columbia</strain>
    </source>
</reference>
<reference key="2">
    <citation type="journal article" date="2017" name="Plant J.">
        <title>Araport11: a complete reannotation of the Arabidopsis thaliana reference genome.</title>
        <authorList>
            <person name="Cheng C.Y."/>
            <person name="Krishnakumar V."/>
            <person name="Chan A.P."/>
            <person name="Thibaud-Nissen F."/>
            <person name="Schobel S."/>
            <person name="Town C.D."/>
        </authorList>
    </citation>
    <scope>GENOME REANNOTATION</scope>
    <source>
        <strain>cv. Columbia</strain>
    </source>
</reference>
<reference key="3">
    <citation type="journal article" date="2006" name="Plant Biotechnol. J.">
        <title>Simultaneous high-throughput recombinational cloning of open reading frames in closed and open configurations.</title>
        <authorList>
            <person name="Underwood B.A."/>
            <person name="Vanderhaeghen R."/>
            <person name="Whitford R."/>
            <person name="Town C.D."/>
            <person name="Hilson P."/>
        </authorList>
    </citation>
    <scope>NUCLEOTIDE SEQUENCE [LARGE SCALE MRNA]</scope>
    <source>
        <strain>cv. Columbia</strain>
    </source>
</reference>
<reference key="4">
    <citation type="journal article" date="2002" name="Genome Biol.">
        <title>Evaluation and classification of RING-finger domains encoded by the Arabidopsis genome.</title>
        <authorList>
            <person name="Kosarev P."/>
            <person name="Mayer K.F.X."/>
            <person name="Hardtke C.S."/>
        </authorList>
    </citation>
    <scope>GENE FAMILY ORGANIZATION</scope>
</reference>
<reference key="5">
    <citation type="journal article" date="2006" name="J. Mol. Evol.">
        <title>The ATL gene family from Arabidopsis thaliana and Oryza sativa comprises a large number of putative ubiquitin ligases of the RING-H2 type.</title>
        <authorList>
            <person name="Serrano M."/>
            <person name="Parra S."/>
            <person name="Alcaraz L.D."/>
            <person name="Guzman P."/>
        </authorList>
    </citation>
    <scope>NOMENCLATURE</scope>
    <scope>GENE FAMILY ORGANIZATION</scope>
</reference>
<feature type="chain" id="PRO_0000055764" description="RING-H2 finger protein ATL20">
    <location>
        <begin position="1"/>
        <end position="299"/>
    </location>
</feature>
<feature type="transmembrane region" description="Helical" evidence="2">
    <location>
        <begin position="172"/>
        <end position="192"/>
    </location>
</feature>
<feature type="zinc finger region" description="RING-type; atypical" evidence="3">
    <location>
        <begin position="253"/>
        <end position="295"/>
    </location>
</feature>
<proteinExistence type="evidence at transcript level"/>
<sequence length="299" mass="33498">MSGTFLVDEINYQKQQISISDPENCMVKRLLTFNTSGSPFSYGFSFYYTFLTCPNEVVIPVWSLMSIPCLSNSTSSFFATSNLTFSKLLPPSCQIVKGLYVPVDVIYKDVITEEKGFSTVPWLGNVLLEWSSPNCRGCEKESLRCGFKNKASLEVKYLADPPDETKSRLRPLIITLCIIGGITATCIAAIRIYNSERFVNQRRQNAAITARNTTQQPRGVVVTTGLDQSTIESYKKVELGESRRLPGTNGIICPICLSEYASKETVRCMPECDHCFHVQCIDEWLKIHSSCPVCRNSRS</sequence>
<evidence type="ECO:0000250" key="1"/>
<evidence type="ECO:0000255" key="2"/>
<evidence type="ECO:0000255" key="3">
    <source>
        <dbReference type="PROSITE-ProRule" id="PRU00175"/>
    </source>
</evidence>
<evidence type="ECO:0000305" key="4"/>
<name>ATL20_ARATH</name>
<organism>
    <name type="scientific">Arabidopsis thaliana</name>
    <name type="common">Mouse-ear cress</name>
    <dbReference type="NCBI Taxonomy" id="3702"/>
    <lineage>
        <taxon>Eukaryota</taxon>
        <taxon>Viridiplantae</taxon>
        <taxon>Streptophyta</taxon>
        <taxon>Embryophyta</taxon>
        <taxon>Tracheophyta</taxon>
        <taxon>Spermatophyta</taxon>
        <taxon>Magnoliopsida</taxon>
        <taxon>eudicotyledons</taxon>
        <taxon>Gunneridae</taxon>
        <taxon>Pentapetalae</taxon>
        <taxon>rosids</taxon>
        <taxon>malvids</taxon>
        <taxon>Brassicales</taxon>
        <taxon>Brassicaceae</taxon>
        <taxon>Camelineae</taxon>
        <taxon>Arabidopsis</taxon>
    </lineage>
</organism>
<accession>Q9C7E9</accession>
<accession>Q1PFR9</accession>